<dbReference type="EC" id="1.8.4.8" evidence="1"/>
<dbReference type="EMBL" id="CP000627">
    <property type="protein sequence ID" value="ABQ21825.1"/>
    <property type="molecule type" value="Genomic_DNA"/>
</dbReference>
<dbReference type="EMBL" id="CP001235">
    <property type="protein sequence ID" value="ACP08452.1"/>
    <property type="molecule type" value="Genomic_DNA"/>
</dbReference>
<dbReference type="RefSeq" id="WP_001133791.1">
    <property type="nucleotide sequence ID" value="NZ_JAACZH010000040.1"/>
</dbReference>
<dbReference type="SMR" id="A5F3I6"/>
<dbReference type="KEGG" id="vco:VC0395_A2797"/>
<dbReference type="KEGG" id="vcr:VC395_0430"/>
<dbReference type="PATRIC" id="fig|345073.21.peg.417"/>
<dbReference type="eggNOG" id="COG0175">
    <property type="taxonomic scope" value="Bacteria"/>
</dbReference>
<dbReference type="HOGENOM" id="CLU_044089_3_0_6"/>
<dbReference type="OrthoDB" id="9794018at2"/>
<dbReference type="UniPathway" id="UPA00140">
    <property type="reaction ID" value="UER00206"/>
</dbReference>
<dbReference type="Proteomes" id="UP000000249">
    <property type="component" value="Chromosome 2"/>
</dbReference>
<dbReference type="GO" id="GO:0005737">
    <property type="term" value="C:cytoplasm"/>
    <property type="evidence" value="ECO:0007669"/>
    <property type="project" value="UniProtKB-SubCell"/>
</dbReference>
<dbReference type="GO" id="GO:0004604">
    <property type="term" value="F:phosphoadenylyl-sulfate reductase (thioredoxin) activity"/>
    <property type="evidence" value="ECO:0007669"/>
    <property type="project" value="UniProtKB-UniRule"/>
</dbReference>
<dbReference type="GO" id="GO:0070814">
    <property type="term" value="P:hydrogen sulfide biosynthetic process"/>
    <property type="evidence" value="ECO:0007669"/>
    <property type="project" value="UniProtKB-UniRule"/>
</dbReference>
<dbReference type="GO" id="GO:0019379">
    <property type="term" value="P:sulfate assimilation, phosphoadenylyl sulfate reduction by phosphoadenylyl-sulfate reductase (thioredoxin)"/>
    <property type="evidence" value="ECO:0007669"/>
    <property type="project" value="UniProtKB-UniRule"/>
</dbReference>
<dbReference type="CDD" id="cd23945">
    <property type="entry name" value="PAPS_reductase"/>
    <property type="match status" value="1"/>
</dbReference>
<dbReference type="FunFam" id="3.40.50.620:FF:000043">
    <property type="entry name" value="Phosphoadenosine phosphosulfate reductase"/>
    <property type="match status" value="1"/>
</dbReference>
<dbReference type="Gene3D" id="3.40.50.620">
    <property type="entry name" value="HUPs"/>
    <property type="match status" value="1"/>
</dbReference>
<dbReference type="HAMAP" id="MF_00063">
    <property type="entry name" value="CysH"/>
    <property type="match status" value="1"/>
</dbReference>
<dbReference type="InterPro" id="IPR004511">
    <property type="entry name" value="PAPS/APS_Rdtase"/>
</dbReference>
<dbReference type="InterPro" id="IPR002500">
    <property type="entry name" value="PAPS_reduct_dom"/>
</dbReference>
<dbReference type="InterPro" id="IPR011800">
    <property type="entry name" value="PAPS_reductase_CysH"/>
</dbReference>
<dbReference type="InterPro" id="IPR014729">
    <property type="entry name" value="Rossmann-like_a/b/a_fold"/>
</dbReference>
<dbReference type="NCBIfam" id="TIGR00434">
    <property type="entry name" value="cysH"/>
    <property type="match status" value="1"/>
</dbReference>
<dbReference type="NCBIfam" id="TIGR02057">
    <property type="entry name" value="PAPS_reductase"/>
    <property type="match status" value="1"/>
</dbReference>
<dbReference type="NCBIfam" id="NF002537">
    <property type="entry name" value="PRK02090.1"/>
    <property type="match status" value="1"/>
</dbReference>
<dbReference type="PANTHER" id="PTHR46509">
    <property type="entry name" value="PHOSPHOADENOSINE PHOSPHOSULFATE REDUCTASE"/>
    <property type="match status" value="1"/>
</dbReference>
<dbReference type="PANTHER" id="PTHR46509:SF1">
    <property type="entry name" value="PHOSPHOADENOSINE PHOSPHOSULFATE REDUCTASE"/>
    <property type="match status" value="1"/>
</dbReference>
<dbReference type="Pfam" id="PF01507">
    <property type="entry name" value="PAPS_reduct"/>
    <property type="match status" value="1"/>
</dbReference>
<dbReference type="PIRSF" id="PIRSF000857">
    <property type="entry name" value="PAPS_reductase"/>
    <property type="match status" value="1"/>
</dbReference>
<dbReference type="SUPFAM" id="SSF52402">
    <property type="entry name" value="Adenine nucleotide alpha hydrolases-like"/>
    <property type="match status" value="1"/>
</dbReference>
<evidence type="ECO:0000255" key="1">
    <source>
        <dbReference type="HAMAP-Rule" id="MF_00063"/>
    </source>
</evidence>
<feature type="chain" id="PRO_1000071166" description="Phosphoadenosine 5'-phosphosulfate reductase">
    <location>
        <begin position="1"/>
        <end position="253"/>
    </location>
</feature>
<feature type="active site" description="Nucleophile; cysteine thiosulfonate intermediate" evidence="1">
    <location>
        <position position="242"/>
    </location>
</feature>
<accession>A5F3I6</accession>
<accession>C3M4I0</accession>
<comment type="function">
    <text evidence="1">Catalyzes the formation of sulfite from phosphoadenosine 5'-phosphosulfate (PAPS) using thioredoxin as an electron donor.</text>
</comment>
<comment type="catalytic activity">
    <reaction evidence="1">
        <text>[thioredoxin]-disulfide + sulfite + adenosine 3',5'-bisphosphate + 2 H(+) = [thioredoxin]-dithiol + 3'-phosphoadenylyl sulfate</text>
        <dbReference type="Rhea" id="RHEA:11724"/>
        <dbReference type="Rhea" id="RHEA-COMP:10698"/>
        <dbReference type="Rhea" id="RHEA-COMP:10700"/>
        <dbReference type="ChEBI" id="CHEBI:15378"/>
        <dbReference type="ChEBI" id="CHEBI:17359"/>
        <dbReference type="ChEBI" id="CHEBI:29950"/>
        <dbReference type="ChEBI" id="CHEBI:50058"/>
        <dbReference type="ChEBI" id="CHEBI:58339"/>
        <dbReference type="ChEBI" id="CHEBI:58343"/>
        <dbReference type="EC" id="1.8.4.8"/>
    </reaction>
</comment>
<comment type="pathway">
    <text evidence="1">Sulfur metabolism; hydrogen sulfide biosynthesis; sulfite from sulfate: step 3/3.</text>
</comment>
<comment type="subcellular location">
    <subcellularLocation>
        <location evidence="1">Cytoplasm</location>
    </subcellularLocation>
</comment>
<comment type="similarity">
    <text evidence="1">Belongs to the PAPS reductase family. CysH subfamily.</text>
</comment>
<proteinExistence type="inferred from homology"/>
<sequence length="253" mass="29249">MPNRTVPTLEELLTLNKVQQTLRLTEVNQHLESLTAQERVVWGLENLQGNHALSSSFGIQAAVMLHLLTSVKSDIPVVLTDTGYLFPETYQFIDELTERLNLNLKVYSAPVSAAWQEARYGKLWEQGVEGIERYNQINKVEPMRRALDELNIGTWFSGLRREQSQSRASLPILSVQNGVFKFLPVIDWTNKEVHYYLKDNDLPYHPLWEQGYLSVGDTHTTQKWQPGMNEEQTRFFGLKRECGLHEDHNDTHQ</sequence>
<reference key="1">
    <citation type="submission" date="2007-03" db="EMBL/GenBank/DDBJ databases">
        <authorList>
            <person name="Heidelberg J."/>
        </authorList>
    </citation>
    <scope>NUCLEOTIDE SEQUENCE [LARGE SCALE GENOMIC DNA]</scope>
    <source>
        <strain>ATCC 39541 / Classical Ogawa 395 / O395</strain>
    </source>
</reference>
<reference key="2">
    <citation type="journal article" date="2008" name="PLoS ONE">
        <title>A recalibrated molecular clock and independent origins for the cholera pandemic clones.</title>
        <authorList>
            <person name="Feng L."/>
            <person name="Reeves P.R."/>
            <person name="Lan R."/>
            <person name="Ren Y."/>
            <person name="Gao C."/>
            <person name="Zhou Z."/>
            <person name="Ren Y."/>
            <person name="Cheng J."/>
            <person name="Wang W."/>
            <person name="Wang J."/>
            <person name="Qian W."/>
            <person name="Li D."/>
            <person name="Wang L."/>
        </authorList>
    </citation>
    <scope>NUCLEOTIDE SEQUENCE [LARGE SCALE GENOMIC DNA]</scope>
    <source>
        <strain>ATCC 39541 / Classical Ogawa 395 / O395</strain>
    </source>
</reference>
<gene>
    <name evidence="1" type="primary">cysH</name>
    <name type="ordered locus">VC0395_A2797</name>
    <name type="ordered locus">VC395_0430</name>
</gene>
<keyword id="KW-0963">Cytoplasm</keyword>
<keyword id="KW-0560">Oxidoreductase</keyword>
<protein>
    <recommendedName>
        <fullName evidence="1">Phosphoadenosine 5'-phosphosulfate reductase</fullName>
        <shortName evidence="1">PAPS reductase</shortName>
        <ecNumber evidence="1">1.8.4.8</ecNumber>
    </recommendedName>
    <alternativeName>
        <fullName evidence="1">3'-phosphoadenylylsulfate reductase</fullName>
    </alternativeName>
    <alternativeName>
        <fullName evidence="1">PAPS reductase, thioredoxin dependent</fullName>
    </alternativeName>
    <alternativeName>
        <fullName evidence="1">PAPS sulfotransferase</fullName>
    </alternativeName>
    <alternativeName>
        <fullName evidence="1">PAdoPS reductase</fullName>
    </alternativeName>
</protein>
<name>CYSH_VIBC3</name>
<organism>
    <name type="scientific">Vibrio cholerae serotype O1 (strain ATCC 39541 / Classical Ogawa 395 / O395)</name>
    <dbReference type="NCBI Taxonomy" id="345073"/>
    <lineage>
        <taxon>Bacteria</taxon>
        <taxon>Pseudomonadati</taxon>
        <taxon>Pseudomonadota</taxon>
        <taxon>Gammaproteobacteria</taxon>
        <taxon>Vibrionales</taxon>
        <taxon>Vibrionaceae</taxon>
        <taxon>Vibrio</taxon>
    </lineage>
</organism>